<comment type="subcellular location">
    <subcellularLocation>
        <location evidence="1">Secreted</location>
    </subcellularLocation>
</comment>
<comment type="tissue specificity">
    <text evidence="4">Expressed by the venom gland.</text>
</comment>
<comment type="similarity">
    <text evidence="4">Belongs to the three-finger toxin family. Ancestral subfamily.</text>
</comment>
<sequence length="85" mass="9587">MKAVILSLVAAFLYSGYTLNCRKCDETVCQLYWTCTEAETLCYILKNKTDTMGLQAIQGCAETCPVPEPDQEVKCCKTDYCNSYF</sequence>
<feature type="signal peptide" evidence="3">
    <location>
        <begin position="1"/>
        <end position="18"/>
    </location>
</feature>
<feature type="chain" id="PRO_0000399990" description="Probable weak neurotoxin 3FTx-Lio1">
    <location>
        <begin position="19"/>
        <end position="85"/>
    </location>
</feature>
<feature type="disulfide bond" evidence="2">
    <location>
        <begin position="21"/>
        <end position="42"/>
    </location>
</feature>
<feature type="disulfide bond" evidence="2">
    <location>
        <begin position="24"/>
        <end position="29"/>
    </location>
</feature>
<feature type="disulfide bond" evidence="2">
    <location>
        <begin position="35"/>
        <end position="60"/>
    </location>
</feature>
<feature type="disulfide bond" evidence="2">
    <location>
        <begin position="64"/>
        <end position="75"/>
    </location>
</feature>
<feature type="disulfide bond" evidence="2">
    <location>
        <begin position="76"/>
        <end position="81"/>
    </location>
</feature>
<dbReference type="EMBL" id="EU029670">
    <property type="protein sequence ID" value="ABU68470.1"/>
    <property type="molecule type" value="mRNA"/>
</dbReference>
<dbReference type="SMR" id="A7X3M9"/>
<dbReference type="GO" id="GO:0005576">
    <property type="term" value="C:extracellular region"/>
    <property type="evidence" value="ECO:0007669"/>
    <property type="project" value="UniProtKB-SubCell"/>
</dbReference>
<dbReference type="GO" id="GO:0090729">
    <property type="term" value="F:toxin activity"/>
    <property type="evidence" value="ECO:0007669"/>
    <property type="project" value="UniProtKB-KW"/>
</dbReference>
<dbReference type="CDD" id="cd00206">
    <property type="entry name" value="TFP_snake_toxin"/>
    <property type="match status" value="1"/>
</dbReference>
<dbReference type="Gene3D" id="2.10.60.10">
    <property type="entry name" value="CD59"/>
    <property type="match status" value="1"/>
</dbReference>
<dbReference type="InterPro" id="IPR003571">
    <property type="entry name" value="Snake_3FTx"/>
</dbReference>
<dbReference type="InterPro" id="IPR045860">
    <property type="entry name" value="Snake_toxin-like_sf"/>
</dbReference>
<dbReference type="InterPro" id="IPR018354">
    <property type="entry name" value="Snake_toxin_con_site"/>
</dbReference>
<dbReference type="InterPro" id="IPR054131">
    <property type="entry name" value="Toxin_cobra-type"/>
</dbReference>
<dbReference type="Pfam" id="PF21947">
    <property type="entry name" value="Toxin_cobra-type"/>
    <property type="match status" value="1"/>
</dbReference>
<dbReference type="SUPFAM" id="SSF57302">
    <property type="entry name" value="Snake toxin-like"/>
    <property type="match status" value="1"/>
</dbReference>
<dbReference type="PROSITE" id="PS00272">
    <property type="entry name" value="SNAKE_TOXIN"/>
    <property type="match status" value="1"/>
</dbReference>
<reference key="1">
    <citation type="journal article" date="2008" name="Mol. Cell. Proteomics">
        <title>Evolution of an arsenal: structural and functional diversification of the venom system in the advanced snakes (Caenophidia).</title>
        <authorList>
            <person name="Fry B.G."/>
            <person name="Scheib H."/>
            <person name="van der Weerd L."/>
            <person name="Young B."/>
            <person name="McNaughtan J."/>
            <person name="Ramjan S.F.R."/>
            <person name="Vidal N."/>
            <person name="Poelmann R.E."/>
            <person name="Norman J.A."/>
        </authorList>
    </citation>
    <scope>NUCLEOTIDE SEQUENCE [MRNA]</scope>
    <source>
        <tissue>Venom gland</tissue>
    </source>
</reference>
<name>3NX1_ERYPO</name>
<evidence type="ECO:0000250" key="1"/>
<evidence type="ECO:0000250" key="2">
    <source>
        <dbReference type="UniProtKB" id="P81782"/>
    </source>
</evidence>
<evidence type="ECO:0000255" key="3"/>
<evidence type="ECO:0000305" key="4"/>
<evidence type="ECO:0000312" key="5">
    <source>
        <dbReference type="EMBL" id="ABU68470.1"/>
    </source>
</evidence>
<protein>
    <recommendedName>
        <fullName evidence="5">Probable weak neurotoxin 3FTx-Lio1</fullName>
    </recommendedName>
</protein>
<organism>
    <name type="scientific">Erythrolamprus poecilogyrus</name>
    <name type="common">Water snake</name>
    <name type="synonym">Liophis poecilogyrus</name>
    <dbReference type="NCBI Taxonomy" id="338838"/>
    <lineage>
        <taxon>Eukaryota</taxon>
        <taxon>Metazoa</taxon>
        <taxon>Chordata</taxon>
        <taxon>Craniata</taxon>
        <taxon>Vertebrata</taxon>
        <taxon>Euteleostomi</taxon>
        <taxon>Lepidosauria</taxon>
        <taxon>Squamata</taxon>
        <taxon>Bifurcata</taxon>
        <taxon>Unidentata</taxon>
        <taxon>Episquamata</taxon>
        <taxon>Toxicofera</taxon>
        <taxon>Serpentes</taxon>
        <taxon>Colubroidea</taxon>
        <taxon>Dipsadidae</taxon>
        <taxon>Erythrolamprus</taxon>
    </lineage>
</organism>
<proteinExistence type="inferred from homology"/>
<accession>A7X3M9</accession>
<keyword id="KW-1015">Disulfide bond</keyword>
<keyword id="KW-0964">Secreted</keyword>
<keyword id="KW-0732">Signal</keyword>
<keyword id="KW-0800">Toxin</keyword>